<proteinExistence type="inferred from homology"/>
<evidence type="ECO:0000255" key="1">
    <source>
        <dbReference type="HAMAP-Rule" id="MF_00908"/>
    </source>
</evidence>
<evidence type="ECO:0000305" key="2"/>
<comment type="function">
    <text evidence="1">Negative regulator of replication initiation, which contributes to regulation of DNA replication and ensures that replication initiation occurs exactly once per chromosome per cell cycle. Binds to pairs of hemimethylated GATC sequences in the oriC region, thus preventing assembly of replication proteins and re-initiation at newly replicated origins. Repression is relieved when the region becomes fully methylated.</text>
</comment>
<comment type="subunit">
    <text evidence="1">Homodimer. Polymerizes to form helical filaments.</text>
</comment>
<comment type="subcellular location">
    <subcellularLocation>
        <location evidence="1">Cytoplasm</location>
    </subcellularLocation>
</comment>
<comment type="similarity">
    <text evidence="1">Belongs to the SeqA family.</text>
</comment>
<comment type="sequence caution" evidence="2">
    <conflict type="erroneous initiation">
        <sequence resource="EMBL-CDS" id="CAG19450"/>
    </conflict>
    <text>Extended N-terminus.</text>
</comment>
<sequence>MKSIEVDEELYRYIASQTQHIGESASDILRRLLMVPAEQQLEVVVPVRPKGIIVSKDAGNEHKLDRVKEMRTLLISDEFAVQGKAIGRFMMILSSLYRIDSDGFIEAAAIKGRTRVYFADNEEALLASGKTTKPKAIPETPYWVITNTNTDRKRQMVDQLMVKMNYNTDIIEKVCGVI</sequence>
<keyword id="KW-0963">Cytoplasm</keyword>
<keyword id="KW-0236">DNA replication inhibitor</keyword>
<keyword id="KW-0238">DNA-binding</keyword>
<keyword id="KW-1185">Reference proteome</keyword>
<organism>
    <name type="scientific">Photobacterium profundum (strain SS9)</name>
    <dbReference type="NCBI Taxonomy" id="298386"/>
    <lineage>
        <taxon>Bacteria</taxon>
        <taxon>Pseudomonadati</taxon>
        <taxon>Pseudomonadota</taxon>
        <taxon>Gammaproteobacteria</taxon>
        <taxon>Vibrionales</taxon>
        <taxon>Vibrionaceae</taxon>
        <taxon>Photobacterium</taxon>
    </lineage>
</organism>
<feature type="chain" id="PRO_0000413929" description="Negative modulator of initiation of replication">
    <location>
        <begin position="1"/>
        <end position="178"/>
    </location>
</feature>
<feature type="region of interest" description="Interaction with DNA" evidence="1">
    <location>
        <begin position="113"/>
        <end position="117"/>
    </location>
</feature>
<dbReference type="EMBL" id="CR378666">
    <property type="protein sequence ID" value="CAG19450.1"/>
    <property type="status" value="ALT_INIT"/>
    <property type="molecule type" value="Genomic_DNA"/>
</dbReference>
<dbReference type="RefSeq" id="WP_011217784.1">
    <property type="nucleotide sequence ID" value="NC_006370.1"/>
</dbReference>
<dbReference type="SMR" id="Q6LTC6"/>
<dbReference type="STRING" id="298386.PBPRA1039"/>
<dbReference type="KEGG" id="ppr:PBPRA1039"/>
<dbReference type="eggNOG" id="COG3057">
    <property type="taxonomic scope" value="Bacteria"/>
</dbReference>
<dbReference type="HOGENOM" id="CLU_099733_0_0_6"/>
<dbReference type="Proteomes" id="UP000000593">
    <property type="component" value="Chromosome 1"/>
</dbReference>
<dbReference type="GO" id="GO:0005737">
    <property type="term" value="C:cytoplasm"/>
    <property type="evidence" value="ECO:0007669"/>
    <property type="project" value="UniProtKB-SubCell"/>
</dbReference>
<dbReference type="GO" id="GO:0003677">
    <property type="term" value="F:DNA binding"/>
    <property type="evidence" value="ECO:0007669"/>
    <property type="project" value="UniProtKB-UniRule"/>
</dbReference>
<dbReference type="GO" id="GO:0032297">
    <property type="term" value="P:negative regulation of DNA-templated DNA replication initiation"/>
    <property type="evidence" value="ECO:0007669"/>
    <property type="project" value="UniProtKB-UniRule"/>
</dbReference>
<dbReference type="GO" id="GO:0006355">
    <property type="term" value="P:regulation of DNA-templated transcription"/>
    <property type="evidence" value="ECO:0007669"/>
    <property type="project" value="InterPro"/>
</dbReference>
<dbReference type="Gene3D" id="1.10.1220.10">
    <property type="entry name" value="Met repressor-like"/>
    <property type="match status" value="1"/>
</dbReference>
<dbReference type="Gene3D" id="1.20.1380.10">
    <property type="entry name" value="Replication modulator SeqA, C-terminal DNA-binding domain"/>
    <property type="match status" value="1"/>
</dbReference>
<dbReference type="HAMAP" id="MF_00908">
    <property type="entry name" value="SeqA"/>
    <property type="match status" value="1"/>
</dbReference>
<dbReference type="InterPro" id="IPR013321">
    <property type="entry name" value="Arc_rbn_hlx_hlx"/>
</dbReference>
<dbReference type="InterPro" id="IPR010985">
    <property type="entry name" value="Ribbon_hlx_hlx"/>
</dbReference>
<dbReference type="InterPro" id="IPR005621">
    <property type="entry name" value="SeqA"/>
</dbReference>
<dbReference type="InterPro" id="IPR026577">
    <property type="entry name" value="SeqA_DNA-bd_C"/>
</dbReference>
<dbReference type="InterPro" id="IPR036835">
    <property type="entry name" value="SeqA_DNA-bd_C_sf"/>
</dbReference>
<dbReference type="InterPro" id="IPR033761">
    <property type="entry name" value="SeqA_N"/>
</dbReference>
<dbReference type="NCBIfam" id="NF008389">
    <property type="entry name" value="PRK11187.1"/>
    <property type="match status" value="1"/>
</dbReference>
<dbReference type="Pfam" id="PF03925">
    <property type="entry name" value="SeqA"/>
    <property type="match status" value="1"/>
</dbReference>
<dbReference type="Pfam" id="PF17206">
    <property type="entry name" value="SeqA_N"/>
    <property type="match status" value="1"/>
</dbReference>
<dbReference type="PIRSF" id="PIRSF019401">
    <property type="entry name" value="SeqA"/>
    <property type="match status" value="1"/>
</dbReference>
<dbReference type="SUPFAM" id="SSF82808">
    <property type="entry name" value="Replication modulator SeqA, C-terminal DNA-binding domain"/>
    <property type="match status" value="1"/>
</dbReference>
<dbReference type="SUPFAM" id="SSF47598">
    <property type="entry name" value="Ribbon-helix-helix"/>
    <property type="match status" value="1"/>
</dbReference>
<reference key="1">
    <citation type="journal article" date="2005" name="Science">
        <title>Life at depth: Photobacterium profundum genome sequence and expression analysis.</title>
        <authorList>
            <person name="Vezzi A."/>
            <person name="Campanaro S."/>
            <person name="D'Angelo M."/>
            <person name="Simonato F."/>
            <person name="Vitulo N."/>
            <person name="Lauro F.M."/>
            <person name="Cestaro A."/>
            <person name="Malacrida G."/>
            <person name="Simionati B."/>
            <person name="Cannata N."/>
            <person name="Romualdi C."/>
            <person name="Bartlett D.H."/>
            <person name="Valle G."/>
        </authorList>
    </citation>
    <scope>NUCLEOTIDE SEQUENCE [LARGE SCALE GENOMIC DNA]</scope>
    <source>
        <strain>ATCC BAA-1253 / SS9</strain>
    </source>
</reference>
<gene>
    <name evidence="1" type="primary">seqA</name>
    <name type="ordered locus">PBPRA1039</name>
</gene>
<protein>
    <recommendedName>
        <fullName evidence="1">Negative modulator of initiation of replication</fullName>
    </recommendedName>
</protein>
<accession>Q6LTC6</accession>
<name>SEQA_PHOPR</name>